<proteinExistence type="inferred from homology"/>
<reference key="1">
    <citation type="journal article" date="2009" name="PLoS ONE">
        <title>Salmonella paratyphi C: genetic divergence from Salmonella choleraesuis and pathogenic convergence with Salmonella typhi.</title>
        <authorList>
            <person name="Liu W.-Q."/>
            <person name="Feng Y."/>
            <person name="Wang Y."/>
            <person name="Zou Q.-H."/>
            <person name="Chen F."/>
            <person name="Guo J.-T."/>
            <person name="Peng Y.-H."/>
            <person name="Jin Y."/>
            <person name="Li Y.-G."/>
            <person name="Hu S.-N."/>
            <person name="Johnston R.N."/>
            <person name="Liu G.-R."/>
            <person name="Liu S.-L."/>
        </authorList>
    </citation>
    <scope>NUCLEOTIDE SEQUENCE [LARGE SCALE GENOMIC DNA]</scope>
    <source>
        <strain>RKS4594</strain>
    </source>
</reference>
<feature type="chain" id="PRO_1000189931" description="Probable GTP-binding protein EngB">
    <location>
        <begin position="1"/>
        <end position="210"/>
    </location>
</feature>
<feature type="domain" description="EngB-type G" evidence="1">
    <location>
        <begin position="25"/>
        <end position="199"/>
    </location>
</feature>
<feature type="binding site" evidence="1">
    <location>
        <begin position="33"/>
        <end position="40"/>
    </location>
    <ligand>
        <name>GTP</name>
        <dbReference type="ChEBI" id="CHEBI:37565"/>
    </ligand>
</feature>
<feature type="binding site" evidence="1">
    <location>
        <position position="40"/>
    </location>
    <ligand>
        <name>Mg(2+)</name>
        <dbReference type="ChEBI" id="CHEBI:18420"/>
    </ligand>
</feature>
<feature type="binding site" evidence="1">
    <location>
        <begin position="60"/>
        <end position="64"/>
    </location>
    <ligand>
        <name>GTP</name>
        <dbReference type="ChEBI" id="CHEBI:37565"/>
    </ligand>
</feature>
<feature type="binding site" evidence="1">
    <location>
        <position position="62"/>
    </location>
    <ligand>
        <name>Mg(2+)</name>
        <dbReference type="ChEBI" id="CHEBI:18420"/>
    </ligand>
</feature>
<feature type="binding site" evidence="1">
    <location>
        <begin position="78"/>
        <end position="81"/>
    </location>
    <ligand>
        <name>GTP</name>
        <dbReference type="ChEBI" id="CHEBI:37565"/>
    </ligand>
</feature>
<feature type="binding site" evidence="1">
    <location>
        <begin position="145"/>
        <end position="148"/>
    </location>
    <ligand>
        <name>GTP</name>
        <dbReference type="ChEBI" id="CHEBI:37565"/>
    </ligand>
</feature>
<feature type="binding site" evidence="1">
    <location>
        <begin position="178"/>
        <end position="180"/>
    </location>
    <ligand>
        <name>GTP</name>
        <dbReference type="ChEBI" id="CHEBI:37565"/>
    </ligand>
</feature>
<keyword id="KW-0131">Cell cycle</keyword>
<keyword id="KW-0132">Cell division</keyword>
<keyword id="KW-0342">GTP-binding</keyword>
<keyword id="KW-0460">Magnesium</keyword>
<keyword id="KW-0479">Metal-binding</keyword>
<keyword id="KW-0547">Nucleotide-binding</keyword>
<keyword id="KW-0717">Septation</keyword>
<protein>
    <recommendedName>
        <fullName evidence="1">Probable GTP-binding protein EngB</fullName>
    </recommendedName>
</protein>
<accession>C0Q3G7</accession>
<comment type="function">
    <text evidence="1">Necessary for normal cell division and for the maintenance of normal septation.</text>
</comment>
<comment type="cofactor">
    <cofactor evidence="1">
        <name>Mg(2+)</name>
        <dbReference type="ChEBI" id="CHEBI:18420"/>
    </cofactor>
</comment>
<comment type="similarity">
    <text evidence="1">Belongs to the TRAFAC class TrmE-Era-EngA-EngB-Septin-like GTPase superfamily. EngB GTPase family.</text>
</comment>
<evidence type="ECO:0000255" key="1">
    <source>
        <dbReference type="HAMAP-Rule" id="MF_00321"/>
    </source>
</evidence>
<organism>
    <name type="scientific">Salmonella paratyphi C (strain RKS4594)</name>
    <dbReference type="NCBI Taxonomy" id="476213"/>
    <lineage>
        <taxon>Bacteria</taxon>
        <taxon>Pseudomonadati</taxon>
        <taxon>Pseudomonadota</taxon>
        <taxon>Gammaproteobacteria</taxon>
        <taxon>Enterobacterales</taxon>
        <taxon>Enterobacteriaceae</taxon>
        <taxon>Salmonella</taxon>
    </lineage>
</organism>
<sequence>MTNLNYQQTHFVMSAPDIRHLPSDCGIEVAFAGRSNAGKSSALNTLTNQKSLARTSKTPGRTQLINLFEVVDGKRLVDLPGYGYAEVPEEMKRKWQRALGEYLEKRRSLQGLVVLMDIRHPLKDLDQQMIQWAVESNIQVLVLLTKADKLASGARKAQLNMVREAVLAFNGDVQVEAFSSLKKQGVDKLRQKLDSWFSELAPVEEIQDGE</sequence>
<name>ENGB_SALPC</name>
<dbReference type="EMBL" id="CP000857">
    <property type="protein sequence ID" value="ACN48169.1"/>
    <property type="molecule type" value="Genomic_DNA"/>
</dbReference>
<dbReference type="SMR" id="C0Q3G7"/>
<dbReference type="KEGG" id="sei:SPC_4104"/>
<dbReference type="HOGENOM" id="CLU_033732_1_0_6"/>
<dbReference type="Proteomes" id="UP000001599">
    <property type="component" value="Chromosome"/>
</dbReference>
<dbReference type="GO" id="GO:0005829">
    <property type="term" value="C:cytosol"/>
    <property type="evidence" value="ECO:0007669"/>
    <property type="project" value="TreeGrafter"/>
</dbReference>
<dbReference type="GO" id="GO:0005525">
    <property type="term" value="F:GTP binding"/>
    <property type="evidence" value="ECO:0007669"/>
    <property type="project" value="UniProtKB-UniRule"/>
</dbReference>
<dbReference type="GO" id="GO:0046872">
    <property type="term" value="F:metal ion binding"/>
    <property type="evidence" value="ECO:0007669"/>
    <property type="project" value="UniProtKB-KW"/>
</dbReference>
<dbReference type="GO" id="GO:0000917">
    <property type="term" value="P:division septum assembly"/>
    <property type="evidence" value="ECO:0007669"/>
    <property type="project" value="UniProtKB-KW"/>
</dbReference>
<dbReference type="CDD" id="cd01876">
    <property type="entry name" value="YihA_EngB"/>
    <property type="match status" value="1"/>
</dbReference>
<dbReference type="FunFam" id="3.40.50.300:FF:000098">
    <property type="entry name" value="Probable GTP-binding protein EngB"/>
    <property type="match status" value="1"/>
</dbReference>
<dbReference type="Gene3D" id="3.40.50.300">
    <property type="entry name" value="P-loop containing nucleotide triphosphate hydrolases"/>
    <property type="match status" value="1"/>
</dbReference>
<dbReference type="HAMAP" id="MF_00321">
    <property type="entry name" value="GTPase_EngB"/>
    <property type="match status" value="1"/>
</dbReference>
<dbReference type="InterPro" id="IPR030393">
    <property type="entry name" value="G_ENGB_dom"/>
</dbReference>
<dbReference type="InterPro" id="IPR006073">
    <property type="entry name" value="GTP-bd"/>
</dbReference>
<dbReference type="InterPro" id="IPR019987">
    <property type="entry name" value="GTP-bd_ribosome_bio_YsxC"/>
</dbReference>
<dbReference type="InterPro" id="IPR027417">
    <property type="entry name" value="P-loop_NTPase"/>
</dbReference>
<dbReference type="NCBIfam" id="TIGR03598">
    <property type="entry name" value="GTPase_YsxC"/>
    <property type="match status" value="1"/>
</dbReference>
<dbReference type="PANTHER" id="PTHR11649:SF13">
    <property type="entry name" value="ENGB-TYPE G DOMAIN-CONTAINING PROTEIN"/>
    <property type="match status" value="1"/>
</dbReference>
<dbReference type="PANTHER" id="PTHR11649">
    <property type="entry name" value="MSS1/TRME-RELATED GTP-BINDING PROTEIN"/>
    <property type="match status" value="1"/>
</dbReference>
<dbReference type="Pfam" id="PF01926">
    <property type="entry name" value="MMR_HSR1"/>
    <property type="match status" value="1"/>
</dbReference>
<dbReference type="SUPFAM" id="SSF52540">
    <property type="entry name" value="P-loop containing nucleoside triphosphate hydrolases"/>
    <property type="match status" value="1"/>
</dbReference>
<dbReference type="PROSITE" id="PS51706">
    <property type="entry name" value="G_ENGB"/>
    <property type="match status" value="1"/>
</dbReference>
<gene>
    <name evidence="1" type="primary">engB</name>
    <name type="ordered locus">SPC_4104</name>
</gene>